<name>DER_STAA9</name>
<evidence type="ECO:0000255" key="1">
    <source>
        <dbReference type="HAMAP-Rule" id="MF_00195"/>
    </source>
</evidence>
<organism>
    <name type="scientific">Staphylococcus aureus (strain JH9)</name>
    <dbReference type="NCBI Taxonomy" id="359786"/>
    <lineage>
        <taxon>Bacteria</taxon>
        <taxon>Bacillati</taxon>
        <taxon>Bacillota</taxon>
        <taxon>Bacilli</taxon>
        <taxon>Bacillales</taxon>
        <taxon>Staphylococcaceae</taxon>
        <taxon>Staphylococcus</taxon>
    </lineage>
</organism>
<sequence>MTKPIVAIVGRPNVGKSTIFNRIVGERVSIVEDTPGVTRDRIYSSGEWLTHDFNIIDTGGIEIGDAPFQTQIRAQAEIAIDEADVIIFMVNVREGLTQSDEMVAQILYKSKKPVVLAVNKVDNMEMRTDVYDFYSLGFGEPYPISGSHGLGLGDLLDAVVSHFGEEEEDPYDEDTIRLSIIGRPNVGKSSLVNAILGEDRVIVSNVAGTTRDAIDTEYSYDGQDYVLIDTAGMRKKGKVYESTEKYSVLRALKAIERSNVVLVVIDAEQGIIEQDKRVAGYAHEQGKAVVIVVNKWDTVEKDSKTMKKFEDEVRKEFQFLDYAQIAFVSAKERTRLRTLFPYINEASENHKKRVQSSTLNEVVTDAISMNPTPTDKGRRLNVFYATQVAIEPPTFVVFVNDVELMHFSYKRYLENQIRAAFGFEGTPIHIIARKRN</sequence>
<gene>
    <name evidence="1" type="primary">der</name>
    <name type="synonym">engA</name>
    <name type="ordered locus">SaurJH9_1532</name>
</gene>
<keyword id="KW-0342">GTP-binding</keyword>
<keyword id="KW-0547">Nucleotide-binding</keyword>
<keyword id="KW-0677">Repeat</keyword>
<keyword id="KW-0690">Ribosome biogenesis</keyword>
<proteinExistence type="inferred from homology"/>
<dbReference type="EMBL" id="CP000703">
    <property type="protein sequence ID" value="ABQ49326.1"/>
    <property type="molecule type" value="Genomic_DNA"/>
</dbReference>
<dbReference type="RefSeq" id="WP_000165530.1">
    <property type="nucleotide sequence ID" value="NC_009487.1"/>
</dbReference>
<dbReference type="SMR" id="A5IT03"/>
<dbReference type="KEGG" id="saj:SaurJH9_1532"/>
<dbReference type="HOGENOM" id="CLU_016077_6_2_9"/>
<dbReference type="GO" id="GO:0005525">
    <property type="term" value="F:GTP binding"/>
    <property type="evidence" value="ECO:0007669"/>
    <property type="project" value="UniProtKB-UniRule"/>
</dbReference>
<dbReference type="GO" id="GO:0043022">
    <property type="term" value="F:ribosome binding"/>
    <property type="evidence" value="ECO:0007669"/>
    <property type="project" value="TreeGrafter"/>
</dbReference>
<dbReference type="GO" id="GO:0042254">
    <property type="term" value="P:ribosome biogenesis"/>
    <property type="evidence" value="ECO:0007669"/>
    <property type="project" value="UniProtKB-KW"/>
</dbReference>
<dbReference type="CDD" id="cd01894">
    <property type="entry name" value="EngA1"/>
    <property type="match status" value="1"/>
</dbReference>
<dbReference type="CDD" id="cd01895">
    <property type="entry name" value="EngA2"/>
    <property type="match status" value="1"/>
</dbReference>
<dbReference type="FunFam" id="3.30.300.20:FF:000004">
    <property type="entry name" value="GTPase Der"/>
    <property type="match status" value="1"/>
</dbReference>
<dbReference type="FunFam" id="3.40.50.300:FF:000040">
    <property type="entry name" value="GTPase Der"/>
    <property type="match status" value="1"/>
</dbReference>
<dbReference type="FunFam" id="3.40.50.300:FF:000057">
    <property type="entry name" value="GTPase Der"/>
    <property type="match status" value="1"/>
</dbReference>
<dbReference type="Gene3D" id="3.30.300.20">
    <property type="match status" value="1"/>
</dbReference>
<dbReference type="Gene3D" id="3.40.50.300">
    <property type="entry name" value="P-loop containing nucleotide triphosphate hydrolases"/>
    <property type="match status" value="2"/>
</dbReference>
<dbReference type="HAMAP" id="MF_00195">
    <property type="entry name" value="GTPase_Der"/>
    <property type="match status" value="1"/>
</dbReference>
<dbReference type="InterPro" id="IPR031166">
    <property type="entry name" value="G_ENGA"/>
</dbReference>
<dbReference type="InterPro" id="IPR006073">
    <property type="entry name" value="GTP-bd"/>
</dbReference>
<dbReference type="InterPro" id="IPR016484">
    <property type="entry name" value="GTPase_Der"/>
</dbReference>
<dbReference type="InterPro" id="IPR032859">
    <property type="entry name" value="KH_dom-like"/>
</dbReference>
<dbReference type="InterPro" id="IPR015946">
    <property type="entry name" value="KH_dom-like_a/b"/>
</dbReference>
<dbReference type="InterPro" id="IPR027417">
    <property type="entry name" value="P-loop_NTPase"/>
</dbReference>
<dbReference type="InterPro" id="IPR005225">
    <property type="entry name" value="Small_GTP-bd"/>
</dbReference>
<dbReference type="NCBIfam" id="TIGR03594">
    <property type="entry name" value="GTPase_EngA"/>
    <property type="match status" value="1"/>
</dbReference>
<dbReference type="NCBIfam" id="TIGR00231">
    <property type="entry name" value="small_GTP"/>
    <property type="match status" value="2"/>
</dbReference>
<dbReference type="PANTHER" id="PTHR43834">
    <property type="entry name" value="GTPASE DER"/>
    <property type="match status" value="1"/>
</dbReference>
<dbReference type="PANTHER" id="PTHR43834:SF6">
    <property type="entry name" value="GTPASE DER"/>
    <property type="match status" value="1"/>
</dbReference>
<dbReference type="Pfam" id="PF14714">
    <property type="entry name" value="KH_dom-like"/>
    <property type="match status" value="1"/>
</dbReference>
<dbReference type="Pfam" id="PF01926">
    <property type="entry name" value="MMR_HSR1"/>
    <property type="match status" value="2"/>
</dbReference>
<dbReference type="PIRSF" id="PIRSF006485">
    <property type="entry name" value="GTP-binding_EngA"/>
    <property type="match status" value="1"/>
</dbReference>
<dbReference type="PRINTS" id="PR00326">
    <property type="entry name" value="GTP1OBG"/>
</dbReference>
<dbReference type="SUPFAM" id="SSF52540">
    <property type="entry name" value="P-loop containing nucleoside triphosphate hydrolases"/>
    <property type="match status" value="2"/>
</dbReference>
<dbReference type="PROSITE" id="PS51712">
    <property type="entry name" value="G_ENGA"/>
    <property type="match status" value="2"/>
</dbReference>
<reference key="1">
    <citation type="submission" date="2007-05" db="EMBL/GenBank/DDBJ databases">
        <title>Complete sequence of chromosome of Staphylococcus aureus subsp. aureus JH9.</title>
        <authorList>
            <consortium name="US DOE Joint Genome Institute"/>
            <person name="Copeland A."/>
            <person name="Lucas S."/>
            <person name="Lapidus A."/>
            <person name="Barry K."/>
            <person name="Detter J.C."/>
            <person name="Glavina del Rio T."/>
            <person name="Hammon N."/>
            <person name="Israni S."/>
            <person name="Pitluck S."/>
            <person name="Chain P."/>
            <person name="Malfatti S."/>
            <person name="Shin M."/>
            <person name="Vergez L."/>
            <person name="Schmutz J."/>
            <person name="Larimer F."/>
            <person name="Land M."/>
            <person name="Hauser L."/>
            <person name="Kyrpides N."/>
            <person name="Kim E."/>
            <person name="Tomasz A."/>
            <person name="Richardson P."/>
        </authorList>
    </citation>
    <scope>NUCLEOTIDE SEQUENCE [LARGE SCALE GENOMIC DNA]</scope>
    <source>
        <strain>JH9</strain>
    </source>
</reference>
<comment type="function">
    <text evidence="1">GTPase that plays an essential role in the late steps of ribosome biogenesis.</text>
</comment>
<comment type="subunit">
    <text evidence="1">Associates with the 50S ribosomal subunit.</text>
</comment>
<comment type="similarity">
    <text evidence="1">Belongs to the TRAFAC class TrmE-Era-EngA-EngB-Septin-like GTPase superfamily. EngA (Der) GTPase family.</text>
</comment>
<protein>
    <recommendedName>
        <fullName evidence="1">GTPase Der</fullName>
    </recommendedName>
    <alternativeName>
        <fullName evidence="1">GTP-binding protein EngA</fullName>
    </alternativeName>
</protein>
<feature type="chain" id="PRO_1000077677" description="GTPase Der">
    <location>
        <begin position="1"/>
        <end position="436"/>
    </location>
</feature>
<feature type="domain" description="EngA-type G 1">
    <location>
        <begin position="4"/>
        <end position="167"/>
    </location>
</feature>
<feature type="domain" description="EngA-type G 2">
    <location>
        <begin position="176"/>
        <end position="351"/>
    </location>
</feature>
<feature type="domain" description="KH-like" evidence="1">
    <location>
        <begin position="352"/>
        <end position="436"/>
    </location>
</feature>
<feature type="binding site" evidence="1">
    <location>
        <begin position="10"/>
        <end position="17"/>
    </location>
    <ligand>
        <name>GTP</name>
        <dbReference type="ChEBI" id="CHEBI:37565"/>
        <label>1</label>
    </ligand>
</feature>
<feature type="binding site" evidence="1">
    <location>
        <begin position="57"/>
        <end position="61"/>
    </location>
    <ligand>
        <name>GTP</name>
        <dbReference type="ChEBI" id="CHEBI:37565"/>
        <label>1</label>
    </ligand>
</feature>
<feature type="binding site" evidence="1">
    <location>
        <begin position="119"/>
        <end position="122"/>
    </location>
    <ligand>
        <name>GTP</name>
        <dbReference type="ChEBI" id="CHEBI:37565"/>
        <label>1</label>
    </ligand>
</feature>
<feature type="binding site" evidence="1">
    <location>
        <begin position="182"/>
        <end position="189"/>
    </location>
    <ligand>
        <name>GTP</name>
        <dbReference type="ChEBI" id="CHEBI:37565"/>
        <label>2</label>
    </ligand>
</feature>
<feature type="binding site" evidence="1">
    <location>
        <begin position="229"/>
        <end position="233"/>
    </location>
    <ligand>
        <name>GTP</name>
        <dbReference type="ChEBI" id="CHEBI:37565"/>
        <label>2</label>
    </ligand>
</feature>
<feature type="binding site" evidence="1">
    <location>
        <begin position="294"/>
        <end position="297"/>
    </location>
    <ligand>
        <name>GTP</name>
        <dbReference type="ChEBI" id="CHEBI:37565"/>
        <label>2</label>
    </ligand>
</feature>
<accession>A5IT03</accession>